<keyword id="KW-0963">Cytoplasm</keyword>
<keyword id="KW-0251">Elongation factor</keyword>
<keyword id="KW-0342">GTP-binding</keyword>
<keyword id="KW-0547">Nucleotide-binding</keyword>
<keyword id="KW-0648">Protein biosynthesis</keyword>
<gene>
    <name evidence="1" type="primary">fusA</name>
    <name type="ordered locus">RPA3253</name>
</gene>
<reference key="1">
    <citation type="journal article" date="2004" name="Nat. Biotechnol.">
        <title>Complete genome sequence of the metabolically versatile photosynthetic bacterium Rhodopseudomonas palustris.</title>
        <authorList>
            <person name="Larimer F.W."/>
            <person name="Chain P."/>
            <person name="Hauser L."/>
            <person name="Lamerdin J.E."/>
            <person name="Malfatti S."/>
            <person name="Do L."/>
            <person name="Land M.L."/>
            <person name="Pelletier D.A."/>
            <person name="Beatty J.T."/>
            <person name="Lang A.S."/>
            <person name="Tabita F.R."/>
            <person name="Gibson J.L."/>
            <person name="Hanson T.E."/>
            <person name="Bobst C."/>
            <person name="Torres y Torres J.L."/>
            <person name="Peres C."/>
            <person name="Harrison F.H."/>
            <person name="Gibson J."/>
            <person name="Harwood C.S."/>
        </authorList>
    </citation>
    <scope>NUCLEOTIDE SEQUENCE [LARGE SCALE GENOMIC DNA]</scope>
    <source>
        <strain>ATCC BAA-98 / CGA009</strain>
    </source>
</reference>
<comment type="function">
    <text evidence="1">Catalyzes the GTP-dependent ribosomal translocation step during translation elongation. During this step, the ribosome changes from the pre-translocational (PRE) to the post-translocational (POST) state as the newly formed A-site-bound peptidyl-tRNA and P-site-bound deacylated tRNA move to the P and E sites, respectively. Catalyzes the coordinated movement of the two tRNA molecules, the mRNA and conformational changes in the ribosome.</text>
</comment>
<comment type="subcellular location">
    <subcellularLocation>
        <location evidence="1">Cytoplasm</location>
    </subcellularLocation>
</comment>
<comment type="similarity">
    <text evidence="1">Belongs to the TRAFAC class translation factor GTPase superfamily. Classic translation factor GTPase family. EF-G/EF-2 subfamily.</text>
</comment>
<dbReference type="EMBL" id="BX572603">
    <property type="protein sequence ID" value="CAE28694.1"/>
    <property type="molecule type" value="Genomic_DNA"/>
</dbReference>
<dbReference type="RefSeq" id="WP_011158797.1">
    <property type="nucleotide sequence ID" value="NZ_CP116810.1"/>
</dbReference>
<dbReference type="SMR" id="Q6N4T4"/>
<dbReference type="STRING" id="258594.RPA3253"/>
<dbReference type="GeneID" id="66894339"/>
<dbReference type="eggNOG" id="COG0480">
    <property type="taxonomic scope" value="Bacteria"/>
</dbReference>
<dbReference type="HOGENOM" id="CLU_002794_4_1_5"/>
<dbReference type="PhylomeDB" id="Q6N4T4"/>
<dbReference type="GO" id="GO:0005737">
    <property type="term" value="C:cytoplasm"/>
    <property type="evidence" value="ECO:0007669"/>
    <property type="project" value="UniProtKB-SubCell"/>
</dbReference>
<dbReference type="GO" id="GO:0005525">
    <property type="term" value="F:GTP binding"/>
    <property type="evidence" value="ECO:0007669"/>
    <property type="project" value="UniProtKB-UniRule"/>
</dbReference>
<dbReference type="GO" id="GO:0003924">
    <property type="term" value="F:GTPase activity"/>
    <property type="evidence" value="ECO:0007669"/>
    <property type="project" value="InterPro"/>
</dbReference>
<dbReference type="GO" id="GO:0097216">
    <property type="term" value="F:guanosine tetraphosphate binding"/>
    <property type="evidence" value="ECO:0007669"/>
    <property type="project" value="UniProtKB-ARBA"/>
</dbReference>
<dbReference type="GO" id="GO:0003746">
    <property type="term" value="F:translation elongation factor activity"/>
    <property type="evidence" value="ECO:0007669"/>
    <property type="project" value="UniProtKB-UniRule"/>
</dbReference>
<dbReference type="GO" id="GO:0032790">
    <property type="term" value="P:ribosome disassembly"/>
    <property type="evidence" value="ECO:0007669"/>
    <property type="project" value="TreeGrafter"/>
</dbReference>
<dbReference type="CDD" id="cd01886">
    <property type="entry name" value="EF-G"/>
    <property type="match status" value="1"/>
</dbReference>
<dbReference type="CDD" id="cd16262">
    <property type="entry name" value="EFG_III"/>
    <property type="match status" value="1"/>
</dbReference>
<dbReference type="CDD" id="cd01434">
    <property type="entry name" value="EFG_mtEFG1_IV"/>
    <property type="match status" value="1"/>
</dbReference>
<dbReference type="CDD" id="cd03713">
    <property type="entry name" value="EFG_mtEFG_C"/>
    <property type="match status" value="1"/>
</dbReference>
<dbReference type="CDD" id="cd04088">
    <property type="entry name" value="EFG_mtEFG_II"/>
    <property type="match status" value="1"/>
</dbReference>
<dbReference type="FunFam" id="2.40.30.10:FF:000006">
    <property type="entry name" value="Elongation factor G"/>
    <property type="match status" value="1"/>
</dbReference>
<dbReference type="FunFam" id="3.30.230.10:FF:000003">
    <property type="entry name" value="Elongation factor G"/>
    <property type="match status" value="1"/>
</dbReference>
<dbReference type="FunFam" id="3.30.70.240:FF:000001">
    <property type="entry name" value="Elongation factor G"/>
    <property type="match status" value="1"/>
</dbReference>
<dbReference type="FunFam" id="3.30.70.870:FF:000001">
    <property type="entry name" value="Elongation factor G"/>
    <property type="match status" value="1"/>
</dbReference>
<dbReference type="FunFam" id="3.40.50.300:FF:000029">
    <property type="entry name" value="Elongation factor G"/>
    <property type="match status" value="1"/>
</dbReference>
<dbReference type="Gene3D" id="3.30.230.10">
    <property type="match status" value="1"/>
</dbReference>
<dbReference type="Gene3D" id="3.30.70.240">
    <property type="match status" value="1"/>
</dbReference>
<dbReference type="Gene3D" id="3.30.70.870">
    <property type="entry name" value="Elongation Factor G (Translational Gtpase), domain 3"/>
    <property type="match status" value="1"/>
</dbReference>
<dbReference type="Gene3D" id="3.40.50.300">
    <property type="entry name" value="P-loop containing nucleotide triphosphate hydrolases"/>
    <property type="match status" value="1"/>
</dbReference>
<dbReference type="Gene3D" id="2.40.30.10">
    <property type="entry name" value="Translation factors"/>
    <property type="match status" value="1"/>
</dbReference>
<dbReference type="HAMAP" id="MF_00054_B">
    <property type="entry name" value="EF_G_EF_2_B"/>
    <property type="match status" value="1"/>
</dbReference>
<dbReference type="InterPro" id="IPR041095">
    <property type="entry name" value="EFG_II"/>
</dbReference>
<dbReference type="InterPro" id="IPR009022">
    <property type="entry name" value="EFG_III"/>
</dbReference>
<dbReference type="InterPro" id="IPR035647">
    <property type="entry name" value="EFG_III/V"/>
</dbReference>
<dbReference type="InterPro" id="IPR047872">
    <property type="entry name" value="EFG_IV"/>
</dbReference>
<dbReference type="InterPro" id="IPR035649">
    <property type="entry name" value="EFG_V"/>
</dbReference>
<dbReference type="InterPro" id="IPR000640">
    <property type="entry name" value="EFG_V-like"/>
</dbReference>
<dbReference type="InterPro" id="IPR004161">
    <property type="entry name" value="EFTu-like_2"/>
</dbReference>
<dbReference type="InterPro" id="IPR031157">
    <property type="entry name" value="G_TR_CS"/>
</dbReference>
<dbReference type="InterPro" id="IPR027417">
    <property type="entry name" value="P-loop_NTPase"/>
</dbReference>
<dbReference type="InterPro" id="IPR020568">
    <property type="entry name" value="Ribosomal_Su5_D2-typ_SF"/>
</dbReference>
<dbReference type="InterPro" id="IPR014721">
    <property type="entry name" value="Ribsml_uS5_D2-typ_fold_subgr"/>
</dbReference>
<dbReference type="InterPro" id="IPR005225">
    <property type="entry name" value="Small_GTP-bd"/>
</dbReference>
<dbReference type="InterPro" id="IPR000795">
    <property type="entry name" value="T_Tr_GTP-bd_dom"/>
</dbReference>
<dbReference type="InterPro" id="IPR009000">
    <property type="entry name" value="Transl_B-barrel_sf"/>
</dbReference>
<dbReference type="InterPro" id="IPR004540">
    <property type="entry name" value="Transl_elong_EFG/EF2"/>
</dbReference>
<dbReference type="InterPro" id="IPR005517">
    <property type="entry name" value="Transl_elong_EFG/EF2_IV"/>
</dbReference>
<dbReference type="NCBIfam" id="TIGR00484">
    <property type="entry name" value="EF-G"/>
    <property type="match status" value="1"/>
</dbReference>
<dbReference type="NCBIfam" id="NF009379">
    <property type="entry name" value="PRK12740.1-3"/>
    <property type="match status" value="1"/>
</dbReference>
<dbReference type="NCBIfam" id="NF009381">
    <property type="entry name" value="PRK12740.1-5"/>
    <property type="match status" value="1"/>
</dbReference>
<dbReference type="NCBIfam" id="TIGR00231">
    <property type="entry name" value="small_GTP"/>
    <property type="match status" value="1"/>
</dbReference>
<dbReference type="PANTHER" id="PTHR43261:SF1">
    <property type="entry name" value="RIBOSOME-RELEASING FACTOR 2, MITOCHONDRIAL"/>
    <property type="match status" value="1"/>
</dbReference>
<dbReference type="PANTHER" id="PTHR43261">
    <property type="entry name" value="TRANSLATION ELONGATION FACTOR G-RELATED"/>
    <property type="match status" value="1"/>
</dbReference>
<dbReference type="Pfam" id="PF00679">
    <property type="entry name" value="EFG_C"/>
    <property type="match status" value="1"/>
</dbReference>
<dbReference type="Pfam" id="PF14492">
    <property type="entry name" value="EFG_III"/>
    <property type="match status" value="1"/>
</dbReference>
<dbReference type="Pfam" id="PF03764">
    <property type="entry name" value="EFG_IV"/>
    <property type="match status" value="1"/>
</dbReference>
<dbReference type="Pfam" id="PF00009">
    <property type="entry name" value="GTP_EFTU"/>
    <property type="match status" value="1"/>
</dbReference>
<dbReference type="Pfam" id="PF03144">
    <property type="entry name" value="GTP_EFTU_D2"/>
    <property type="match status" value="1"/>
</dbReference>
<dbReference type="PRINTS" id="PR00315">
    <property type="entry name" value="ELONGATNFCT"/>
</dbReference>
<dbReference type="SMART" id="SM00838">
    <property type="entry name" value="EFG_C"/>
    <property type="match status" value="1"/>
</dbReference>
<dbReference type="SMART" id="SM00889">
    <property type="entry name" value="EFG_IV"/>
    <property type="match status" value="1"/>
</dbReference>
<dbReference type="SUPFAM" id="SSF54980">
    <property type="entry name" value="EF-G C-terminal domain-like"/>
    <property type="match status" value="2"/>
</dbReference>
<dbReference type="SUPFAM" id="SSF52540">
    <property type="entry name" value="P-loop containing nucleoside triphosphate hydrolases"/>
    <property type="match status" value="1"/>
</dbReference>
<dbReference type="SUPFAM" id="SSF54211">
    <property type="entry name" value="Ribosomal protein S5 domain 2-like"/>
    <property type="match status" value="1"/>
</dbReference>
<dbReference type="SUPFAM" id="SSF50447">
    <property type="entry name" value="Translation proteins"/>
    <property type="match status" value="1"/>
</dbReference>
<dbReference type="PROSITE" id="PS00301">
    <property type="entry name" value="G_TR_1"/>
    <property type="match status" value="1"/>
</dbReference>
<dbReference type="PROSITE" id="PS51722">
    <property type="entry name" value="G_TR_2"/>
    <property type="match status" value="1"/>
</dbReference>
<accession>Q6N4T4</accession>
<organism>
    <name type="scientific">Rhodopseudomonas palustris (strain ATCC BAA-98 / CGA009)</name>
    <dbReference type="NCBI Taxonomy" id="258594"/>
    <lineage>
        <taxon>Bacteria</taxon>
        <taxon>Pseudomonadati</taxon>
        <taxon>Pseudomonadota</taxon>
        <taxon>Alphaproteobacteria</taxon>
        <taxon>Hyphomicrobiales</taxon>
        <taxon>Nitrobacteraceae</taxon>
        <taxon>Rhodopseudomonas</taxon>
    </lineage>
</organism>
<feature type="chain" id="PRO_0000091194" description="Elongation factor G">
    <location>
        <begin position="1"/>
        <end position="690"/>
    </location>
</feature>
<feature type="domain" description="tr-type G">
    <location>
        <begin position="8"/>
        <end position="283"/>
    </location>
</feature>
<feature type="binding site" evidence="1">
    <location>
        <begin position="17"/>
        <end position="24"/>
    </location>
    <ligand>
        <name>GTP</name>
        <dbReference type="ChEBI" id="CHEBI:37565"/>
    </ligand>
</feature>
<feature type="binding site" evidence="1">
    <location>
        <begin position="81"/>
        <end position="85"/>
    </location>
    <ligand>
        <name>GTP</name>
        <dbReference type="ChEBI" id="CHEBI:37565"/>
    </ligand>
</feature>
<feature type="binding site" evidence="1">
    <location>
        <begin position="135"/>
        <end position="138"/>
    </location>
    <ligand>
        <name>GTP</name>
        <dbReference type="ChEBI" id="CHEBI:37565"/>
    </ligand>
</feature>
<proteinExistence type="inferred from homology"/>
<sequence>MPRVHAIEDYRNFGIMAHIDAGKTTTTERILFYTGKSHKIGEVHEGAATMDWMTQEQERGITITSAATTAFWNGKRLNIIDTPGHVDFTIEVERSLRVLDGAVCVLDSNQGVEPQTETVWRQGDKYKVPRIVFANKMDKTGADFFKCLQDIVDRLGAKPVAIQLPIGSENNFKGVIDLVRMKAVVWNDESLGAKFEDAEIPAELLDQAKEYREKMIEAAVELDDDAMSAYLEGNEPDEATLKRLIRKAVLTGAFYPVLCGSAFKNKGVQPLLDAVVDYLPSPLDVPAIKGTDDKGNEVVRKADDKEPLSLLAFKIMDDPFVGTITFCRIYSGVLLSGTGVVNSTREKKERIGRMLLMHANNREDIKEAYAGDIVALAGLKEARTGDTLCDPANPVILEKMEFPEPVIEIAIEPKSKADQEKLGVALAKLAAEDPSFRVSTDLESGQTILKGMGELHLDIKVDILKRTYKVDANIGAPQVAFRERITKKAEVDYTHKKQTGGTGQFAAVSFVVEPNEPGGGYVFESKIVGGAVPKEYIPGVEKGIESVLSSGVVAGFPVVDVKVTLVDGKYHDVDSSALAFEIASRAAFREALQKGKSVLLEPIMKVEVVTPEDYTGSVIGDLNSRRGQIQGQDMRGNANVINAMVPLMNMFGYVNNLRSMSQGRANFTMQFDHYAEAPANVSAEVQKKFA</sequence>
<name>EFG_RHOPA</name>
<protein>
    <recommendedName>
        <fullName evidence="1">Elongation factor G</fullName>
        <shortName evidence="1">EF-G</shortName>
    </recommendedName>
</protein>
<evidence type="ECO:0000255" key="1">
    <source>
        <dbReference type="HAMAP-Rule" id="MF_00054"/>
    </source>
</evidence>